<feature type="chain" id="PRO_0000438863" description="High affinity cGMP-specific 3',5'-cyclic phosphodiesterase 9A">
    <location>
        <begin position="1"/>
        <end position="1526"/>
    </location>
</feature>
<feature type="domain" description="PDEase" evidence="2">
    <location>
        <begin position="664"/>
        <end position="985"/>
    </location>
</feature>
<feature type="region of interest" description="Disordered" evidence="3">
    <location>
        <begin position="1"/>
        <end position="48"/>
    </location>
</feature>
<feature type="region of interest" description="Disordered" evidence="3">
    <location>
        <begin position="266"/>
        <end position="348"/>
    </location>
</feature>
<feature type="region of interest" description="Disordered" evidence="3">
    <location>
        <begin position="393"/>
        <end position="476"/>
    </location>
</feature>
<feature type="region of interest" description="Disordered" evidence="3">
    <location>
        <begin position="986"/>
        <end position="1170"/>
    </location>
</feature>
<feature type="region of interest" description="Disordered" evidence="3">
    <location>
        <begin position="1265"/>
        <end position="1284"/>
    </location>
</feature>
<feature type="region of interest" description="Disordered" evidence="3">
    <location>
        <begin position="1314"/>
        <end position="1351"/>
    </location>
</feature>
<feature type="region of interest" description="Disordered" evidence="3">
    <location>
        <begin position="1372"/>
        <end position="1406"/>
    </location>
</feature>
<feature type="region of interest" description="Disordered" evidence="3">
    <location>
        <begin position="1469"/>
        <end position="1496"/>
    </location>
</feature>
<feature type="compositionally biased region" description="Low complexity" evidence="3">
    <location>
        <begin position="1"/>
        <end position="43"/>
    </location>
</feature>
<feature type="compositionally biased region" description="Basic and acidic residues" evidence="3">
    <location>
        <begin position="270"/>
        <end position="282"/>
    </location>
</feature>
<feature type="compositionally biased region" description="Basic and acidic residues" evidence="3">
    <location>
        <begin position="305"/>
        <end position="314"/>
    </location>
</feature>
<feature type="compositionally biased region" description="Low complexity" evidence="3">
    <location>
        <begin position="324"/>
        <end position="348"/>
    </location>
</feature>
<feature type="compositionally biased region" description="Low complexity" evidence="3">
    <location>
        <begin position="401"/>
        <end position="440"/>
    </location>
</feature>
<feature type="compositionally biased region" description="Polar residues" evidence="3">
    <location>
        <begin position="441"/>
        <end position="462"/>
    </location>
</feature>
<feature type="compositionally biased region" description="Low complexity" evidence="3">
    <location>
        <begin position="993"/>
        <end position="1005"/>
    </location>
</feature>
<feature type="compositionally biased region" description="Gly residues" evidence="3">
    <location>
        <begin position="1033"/>
        <end position="1057"/>
    </location>
</feature>
<feature type="compositionally biased region" description="Polar residues" evidence="3">
    <location>
        <begin position="1065"/>
        <end position="1093"/>
    </location>
</feature>
<feature type="compositionally biased region" description="Basic and acidic residues" evidence="3">
    <location>
        <begin position="1125"/>
        <end position="1136"/>
    </location>
</feature>
<feature type="compositionally biased region" description="Low complexity" evidence="3">
    <location>
        <begin position="1139"/>
        <end position="1148"/>
    </location>
</feature>
<feature type="compositionally biased region" description="Low complexity" evidence="3">
    <location>
        <begin position="1314"/>
        <end position="1324"/>
    </location>
</feature>
<feature type="compositionally biased region" description="Gly residues" evidence="3">
    <location>
        <begin position="1325"/>
        <end position="1340"/>
    </location>
</feature>
<feature type="compositionally biased region" description="Low complexity" evidence="3">
    <location>
        <begin position="1341"/>
        <end position="1350"/>
    </location>
</feature>
<feature type="compositionally biased region" description="Low complexity" evidence="3">
    <location>
        <begin position="1375"/>
        <end position="1397"/>
    </location>
</feature>
<feature type="compositionally biased region" description="Polar residues" evidence="3">
    <location>
        <begin position="1470"/>
        <end position="1486"/>
    </location>
</feature>
<feature type="active site" description="Proton donor" evidence="1">
    <location>
        <position position="740"/>
    </location>
</feature>
<feature type="binding site" evidence="1">
    <location>
        <begin position="740"/>
        <end position="744"/>
    </location>
    <ligand>
        <name>3',5'-cyclic GMP</name>
        <dbReference type="ChEBI" id="CHEBI:57746"/>
    </ligand>
</feature>
<feature type="binding site" evidence="1">
    <location>
        <position position="744"/>
    </location>
    <ligand>
        <name>Zn(2+)</name>
        <dbReference type="ChEBI" id="CHEBI:29105"/>
    </ligand>
</feature>
<feature type="binding site" evidence="1">
    <location>
        <position position="780"/>
    </location>
    <ligand>
        <name>Zn(2+)</name>
        <dbReference type="ChEBI" id="CHEBI:29105"/>
    </ligand>
</feature>
<feature type="binding site" evidence="1">
    <location>
        <position position="781"/>
    </location>
    <ligand>
        <name>3',5'-cyclic GMP</name>
        <dbReference type="ChEBI" id="CHEBI:57746"/>
    </ligand>
</feature>
<feature type="binding site" evidence="1">
    <location>
        <position position="781"/>
    </location>
    <ligand>
        <name>Mg(2+)</name>
        <dbReference type="ChEBI" id="CHEBI:18420"/>
    </ligand>
</feature>
<feature type="binding site" evidence="1">
    <location>
        <position position="781"/>
    </location>
    <ligand>
        <name>Zn(2+)</name>
        <dbReference type="ChEBI" id="CHEBI:29105"/>
    </ligand>
</feature>
<feature type="binding site" evidence="1">
    <location>
        <position position="890"/>
    </location>
    <ligand>
        <name>3',5'-cyclic GMP</name>
        <dbReference type="ChEBI" id="CHEBI:57746"/>
    </ligand>
</feature>
<feature type="binding site" evidence="1">
    <location>
        <position position="890"/>
    </location>
    <ligand>
        <name>Zn(2+)</name>
        <dbReference type="ChEBI" id="CHEBI:29105"/>
    </ligand>
</feature>
<reference evidence="8" key="1">
    <citation type="journal article" date="2000" name="Science">
        <title>The genome sequence of Drosophila melanogaster.</title>
        <authorList>
            <person name="Adams M.D."/>
            <person name="Celniker S.E."/>
            <person name="Holt R.A."/>
            <person name="Evans C.A."/>
            <person name="Gocayne J.D."/>
            <person name="Amanatides P.G."/>
            <person name="Scherer S.E."/>
            <person name="Li P.W."/>
            <person name="Hoskins R.A."/>
            <person name="Galle R.F."/>
            <person name="George R.A."/>
            <person name="Lewis S.E."/>
            <person name="Richards S."/>
            <person name="Ashburner M."/>
            <person name="Henderson S.N."/>
            <person name="Sutton G.G."/>
            <person name="Wortman J.R."/>
            <person name="Yandell M.D."/>
            <person name="Zhang Q."/>
            <person name="Chen L.X."/>
            <person name="Brandon R.C."/>
            <person name="Rogers Y.-H.C."/>
            <person name="Blazej R.G."/>
            <person name="Champe M."/>
            <person name="Pfeiffer B.D."/>
            <person name="Wan K.H."/>
            <person name="Doyle C."/>
            <person name="Baxter E.G."/>
            <person name="Helt G."/>
            <person name="Nelson C.R."/>
            <person name="Miklos G.L.G."/>
            <person name="Abril J.F."/>
            <person name="Agbayani A."/>
            <person name="An H.-J."/>
            <person name="Andrews-Pfannkoch C."/>
            <person name="Baldwin D."/>
            <person name="Ballew R.M."/>
            <person name="Basu A."/>
            <person name="Baxendale J."/>
            <person name="Bayraktaroglu L."/>
            <person name="Beasley E.M."/>
            <person name="Beeson K.Y."/>
            <person name="Benos P.V."/>
            <person name="Berman B.P."/>
            <person name="Bhandari D."/>
            <person name="Bolshakov S."/>
            <person name="Borkova D."/>
            <person name="Botchan M.R."/>
            <person name="Bouck J."/>
            <person name="Brokstein P."/>
            <person name="Brottier P."/>
            <person name="Burtis K.C."/>
            <person name="Busam D.A."/>
            <person name="Butler H."/>
            <person name="Cadieu E."/>
            <person name="Center A."/>
            <person name="Chandra I."/>
            <person name="Cherry J.M."/>
            <person name="Cawley S."/>
            <person name="Dahlke C."/>
            <person name="Davenport L.B."/>
            <person name="Davies P."/>
            <person name="de Pablos B."/>
            <person name="Delcher A."/>
            <person name="Deng Z."/>
            <person name="Mays A.D."/>
            <person name="Dew I."/>
            <person name="Dietz S.M."/>
            <person name="Dodson K."/>
            <person name="Doup L.E."/>
            <person name="Downes M."/>
            <person name="Dugan-Rocha S."/>
            <person name="Dunkov B.C."/>
            <person name="Dunn P."/>
            <person name="Durbin K.J."/>
            <person name="Evangelista C.C."/>
            <person name="Ferraz C."/>
            <person name="Ferriera S."/>
            <person name="Fleischmann W."/>
            <person name="Fosler C."/>
            <person name="Gabrielian A.E."/>
            <person name="Garg N.S."/>
            <person name="Gelbart W.M."/>
            <person name="Glasser K."/>
            <person name="Glodek A."/>
            <person name="Gong F."/>
            <person name="Gorrell J.H."/>
            <person name="Gu Z."/>
            <person name="Guan P."/>
            <person name="Harris M."/>
            <person name="Harris N.L."/>
            <person name="Harvey D.A."/>
            <person name="Heiman T.J."/>
            <person name="Hernandez J.R."/>
            <person name="Houck J."/>
            <person name="Hostin D."/>
            <person name="Houston K.A."/>
            <person name="Howland T.J."/>
            <person name="Wei M.-H."/>
            <person name="Ibegwam C."/>
            <person name="Jalali M."/>
            <person name="Kalush F."/>
            <person name="Karpen G.H."/>
            <person name="Ke Z."/>
            <person name="Kennison J.A."/>
            <person name="Ketchum K.A."/>
            <person name="Kimmel B.E."/>
            <person name="Kodira C.D."/>
            <person name="Kraft C.L."/>
            <person name="Kravitz S."/>
            <person name="Kulp D."/>
            <person name="Lai Z."/>
            <person name="Lasko P."/>
            <person name="Lei Y."/>
            <person name="Levitsky A.A."/>
            <person name="Li J.H."/>
            <person name="Li Z."/>
            <person name="Liang Y."/>
            <person name="Lin X."/>
            <person name="Liu X."/>
            <person name="Mattei B."/>
            <person name="McIntosh T.C."/>
            <person name="McLeod M.P."/>
            <person name="McPherson D."/>
            <person name="Merkulov G."/>
            <person name="Milshina N.V."/>
            <person name="Mobarry C."/>
            <person name="Morris J."/>
            <person name="Moshrefi A."/>
            <person name="Mount S.M."/>
            <person name="Moy M."/>
            <person name="Murphy B."/>
            <person name="Murphy L."/>
            <person name="Muzny D.M."/>
            <person name="Nelson D.L."/>
            <person name="Nelson D.R."/>
            <person name="Nelson K.A."/>
            <person name="Nixon K."/>
            <person name="Nusskern D.R."/>
            <person name="Pacleb J.M."/>
            <person name="Palazzolo M."/>
            <person name="Pittman G.S."/>
            <person name="Pan S."/>
            <person name="Pollard J."/>
            <person name="Puri V."/>
            <person name="Reese M.G."/>
            <person name="Reinert K."/>
            <person name="Remington K."/>
            <person name="Saunders R.D.C."/>
            <person name="Scheeler F."/>
            <person name="Shen H."/>
            <person name="Shue B.C."/>
            <person name="Siden-Kiamos I."/>
            <person name="Simpson M."/>
            <person name="Skupski M.P."/>
            <person name="Smith T.J."/>
            <person name="Spier E."/>
            <person name="Spradling A.C."/>
            <person name="Stapleton M."/>
            <person name="Strong R."/>
            <person name="Sun E."/>
            <person name="Svirskas R."/>
            <person name="Tector C."/>
            <person name="Turner R."/>
            <person name="Venter E."/>
            <person name="Wang A.H."/>
            <person name="Wang X."/>
            <person name="Wang Z.-Y."/>
            <person name="Wassarman D.A."/>
            <person name="Weinstock G.M."/>
            <person name="Weissenbach J."/>
            <person name="Williams S.M."/>
            <person name="Woodage T."/>
            <person name="Worley K.C."/>
            <person name="Wu D."/>
            <person name="Yang S."/>
            <person name="Yao Q.A."/>
            <person name="Ye J."/>
            <person name="Yeh R.-F."/>
            <person name="Zaveri J.S."/>
            <person name="Zhan M."/>
            <person name="Zhang G."/>
            <person name="Zhao Q."/>
            <person name="Zheng L."/>
            <person name="Zheng X.H."/>
            <person name="Zhong F.N."/>
            <person name="Zhong W."/>
            <person name="Zhou X."/>
            <person name="Zhu S.C."/>
            <person name="Zhu X."/>
            <person name="Smith H.O."/>
            <person name="Gibbs R.A."/>
            <person name="Myers E.W."/>
            <person name="Rubin G.M."/>
            <person name="Venter J.C."/>
        </authorList>
    </citation>
    <scope>NUCLEOTIDE SEQUENCE [LARGE SCALE GENOMIC DNA]</scope>
    <source>
        <strain evidence="8">Berkeley</strain>
    </source>
</reference>
<reference evidence="8" key="2">
    <citation type="journal article" date="2002" name="Genome Biol.">
        <title>Annotation of the Drosophila melanogaster euchromatic genome: a systematic review.</title>
        <authorList>
            <person name="Misra S."/>
            <person name="Crosby M.A."/>
            <person name="Mungall C.J."/>
            <person name="Matthews B.B."/>
            <person name="Campbell K.S."/>
            <person name="Hradecky P."/>
            <person name="Huang Y."/>
            <person name="Kaminker J.S."/>
            <person name="Millburn G.H."/>
            <person name="Prochnik S.E."/>
            <person name="Smith C.D."/>
            <person name="Tupy J.L."/>
            <person name="Whitfield E.J."/>
            <person name="Bayraktaroglu L."/>
            <person name="Berman B.P."/>
            <person name="Bettencourt B.R."/>
            <person name="Celniker S.E."/>
            <person name="de Grey A.D.N.J."/>
            <person name="Drysdale R.A."/>
            <person name="Harris N.L."/>
            <person name="Richter J."/>
            <person name="Russo S."/>
            <person name="Schroeder A.J."/>
            <person name="Shu S.Q."/>
            <person name="Stapleton M."/>
            <person name="Yamada C."/>
            <person name="Ashburner M."/>
            <person name="Gelbart W.M."/>
            <person name="Rubin G.M."/>
            <person name="Lewis S.E."/>
        </authorList>
    </citation>
    <scope>GENOME REANNOTATION</scope>
    <source>
        <strain evidence="8">Berkeley</strain>
    </source>
</reference>
<reference evidence="6" key="3">
    <citation type="journal article" date="2005" name="Biochem. J.">
        <title>Cyclic nucleotide phosphodiesterases in Drosophila melanogaster.</title>
        <authorList>
            <person name="Day J.P."/>
            <person name="Dow J.A.T."/>
            <person name="Houslay M.D."/>
            <person name="Davies S.A."/>
        </authorList>
    </citation>
    <scope>TISSUE SPECIFICITY</scope>
</reference>
<accession>Q9I7S6</accession>
<keyword id="KW-0140">cGMP</keyword>
<keyword id="KW-0378">Hydrolase</keyword>
<keyword id="KW-0460">Magnesium</keyword>
<keyword id="KW-0479">Metal-binding</keyword>
<keyword id="KW-1185">Reference proteome</keyword>
<keyword id="KW-0862">Zinc</keyword>
<gene>
    <name evidence="7" type="primary">Pde9</name>
    <name evidence="7" type="ORF">CG42276</name>
</gene>
<protein>
    <recommendedName>
        <fullName evidence="6">High affinity cGMP-specific 3',5'-cyclic phosphodiesterase 9A</fullName>
        <ecNumber evidence="1">3.1.4.35</ecNumber>
    </recommendedName>
    <alternativeName>
        <fullName evidence="5">Phosphodiesterase 9</fullName>
    </alternativeName>
</protein>
<sequence length="1526" mass="162819">MYQDSGCSSSSSRRGSSSAAAATSTAATAAETAAAAAATTTSSSDEETLETLTIITTTITDSDIHATTTTTTVIASGTATTAAAAATTATLATLATLASNSDIEDSSPVESEDSEECEYIEIDCQTTAQEGTSPSGGSSSSGNAVLLQRSSNNLQQQQQQQQQQQQHLQLQLQQADERLLRKIGYIASRVRCLSKYYGDFRLVNPYSARRQRRQLQEILLRHSIFDPGKEHQRAIVLAAATAAIAGPLAAIDCVCGSSSISLEAVSSRSRSSELEDDHHEQDQVQEEQEQEQHQGDTEDNEEEQEHPSEKPERTDIEEEPPPAIAVTTTTTATVRRKSSSSSTISGTATVSGSVSVSASASQSFCSNNINLLEELLIQFYEEQDHRSNLTVIRHHHHQQHQQHQQQQRITNNNNNNNNCNSIQNNNNMSNPAATAAATATPSVEQPATSGTTNIHLQPTSLPDGSDNPRRRRASDCSAVQAALQNQLHCITLKNNNCGKAMPFHRGSCGAAGEHLLAANSIANRATIILSKSCSNVDGDATATAATALSSTVGGGIGGIGGSIKMRASATDIETNALNGARDAIVASNNGNNGNNGNNGNNEYSILQLNNTIIQCHFNDDDFRALVKDLKRKVEYTERMNWLCLSKRPLGPPHRKSSLPKHQEVKRRFLEICDTTFSEEVRAALRLPAFDSYEWSDADVIHLMQTMFVELGFIEKFSIPVDTLREWLYEVYKHYNEVPFHNFRHCFCVAQMMYAITRQANLLSRLGDLECLILLVSCICHDLDHPGYNNIYQINARTELALRYNDISPLENHHCSIAFRLLEHPECNIFKNFSRDTFNNIREGIIRCILATDMARHNEILTQFMEITPIFDYSNRAHINLLCMILIKVADISNEARPMDVAEPWLDRLLQEFFAQSAAEKSEGLPVTPFMDPDKVSKPGSQVRFIGLVLLPLFEALGELVPELTELIIIPVRIALEYYRRLNDAQTKTRKSVADSNTSATSDSNSGTIDSNAAMVSTPGGASDKLSLDKGQGNSQGSGGGGGGGGGGGAGGGTGSGCGSNAAGSVSPQMPRSGSGISVKSRRSIPSQKSASRTSVDEPGGMASELHDLPEGSESGDSETATEVDVAEKTSKFKVDTEGSSNRSKSSHSTSRKSSREKRPSMIGELCSSGGGQRIRNSYGNIHGYHSNRCHFGNNRAVSLDQYSSAGNNRRLSDGLPQVISDSNVFYGRHNRSSTETTVAVGNPQDTNANTNHPVGCQLKELLARTEADSDGEGDGNGREDKKIPLVIPSMPQLATSSNGNISPTLVVTEQILPSNGSTRSSASSGRGGSGVPGGSGGSGMPGPSAGSGSSWKSRLRQFSDYFSFSFDKSNKRFGSTRSSPCPGSNSSSGRTNNNANGLGENQDGLGAGGGIKPGMCCTTITNSSGSTVKGETRGGTAGAGGGALTTMTTGNDAHQRHRAYSLDVPGMMRYSSNDSSRHPSNNTLQSAGGGAGLTTGLEVTAQRVPPSLSVEMGLASGSSSEAGPKI</sequence>
<evidence type="ECO:0000250" key="1">
    <source>
        <dbReference type="UniProtKB" id="O76083"/>
    </source>
</evidence>
<evidence type="ECO:0000255" key="2">
    <source>
        <dbReference type="PROSITE-ProRule" id="PRU01192"/>
    </source>
</evidence>
<evidence type="ECO:0000256" key="3">
    <source>
        <dbReference type="SAM" id="MobiDB-lite"/>
    </source>
</evidence>
<evidence type="ECO:0000269" key="4">
    <source>
    </source>
</evidence>
<evidence type="ECO:0000303" key="5">
    <source>
    </source>
</evidence>
<evidence type="ECO:0000305" key="6"/>
<evidence type="ECO:0000312" key="7">
    <source>
        <dbReference type="FlyBase" id="FBgn0259171"/>
    </source>
</evidence>
<evidence type="ECO:0000312" key="8">
    <source>
        <dbReference type="Proteomes" id="UP000000803"/>
    </source>
</evidence>
<comment type="function">
    <text evidence="1">Specifically hydrolyzes the second messenger cGMP, which is a key regulator of many important physiological processes. Highly specific: compared to other members of the cyclic nucleotide phosphodiesterase family, has the highest affinity and selectivity for cGMP.</text>
</comment>
<comment type="catalytic activity">
    <reaction evidence="1">
        <text>3',5'-cyclic GMP + H2O = GMP + H(+)</text>
        <dbReference type="Rhea" id="RHEA:16957"/>
        <dbReference type="ChEBI" id="CHEBI:15377"/>
        <dbReference type="ChEBI" id="CHEBI:15378"/>
        <dbReference type="ChEBI" id="CHEBI:57746"/>
        <dbReference type="ChEBI" id="CHEBI:58115"/>
        <dbReference type="EC" id="3.1.4.35"/>
    </reaction>
</comment>
<comment type="cofactor">
    <cofactor evidence="1">
        <name>Zn(2+)</name>
        <dbReference type="ChEBI" id="CHEBI:29105"/>
    </cofactor>
    <text evidence="1">Binds 1 Zn(2+) ion per subunit. Binds 2 divalent metal cations per subunit: site 1 preferentially binds zinc, while site 2 has a preference for magnesium. Tightly binds zinc.</text>
</comment>
<comment type="cofactor">
    <cofactor evidence="1">
        <name>Mg(2+)</name>
        <dbReference type="ChEBI" id="CHEBI:18420"/>
    </cofactor>
    <text evidence="1">Binds 1 Mg(2+) ions per subunit. Binds 2 divalent metal cations per subunit: site 1 preferentially binds zinc, while site 2 has a preference for magnesium. Binds magnesium less tightly than zinc.</text>
</comment>
<comment type="pathway">
    <text evidence="1">Purine metabolism; 3',5'-cyclic GMP degradation; GMP from 3',5'-cyclic GMP: step 1/1.</text>
</comment>
<comment type="tissue specificity">
    <text evidence="4">Expressed in Malpighian tubules and adult fly head.</text>
</comment>
<comment type="similarity">
    <text evidence="6">Belongs to the cyclic nucleotide phosphodiesterase family. PDE9 subfamily.</text>
</comment>
<comment type="caution">
    <text evidence="4 6">No activity observed following immunoprecipitation from adult head (PubMed:15673286). However, it is likely that the protein has phosphodiesterase activity based on the conservation of the active site as well as nucleotide-binding and metal-binding sites.</text>
</comment>
<organism evidence="8">
    <name type="scientific">Drosophila melanogaster</name>
    <name type="common">Fruit fly</name>
    <dbReference type="NCBI Taxonomy" id="7227"/>
    <lineage>
        <taxon>Eukaryota</taxon>
        <taxon>Metazoa</taxon>
        <taxon>Ecdysozoa</taxon>
        <taxon>Arthropoda</taxon>
        <taxon>Hexapoda</taxon>
        <taxon>Insecta</taxon>
        <taxon>Pterygota</taxon>
        <taxon>Neoptera</taxon>
        <taxon>Endopterygota</taxon>
        <taxon>Diptera</taxon>
        <taxon>Brachycera</taxon>
        <taxon>Muscomorpha</taxon>
        <taxon>Ephydroidea</taxon>
        <taxon>Drosophilidae</taxon>
        <taxon>Drosophila</taxon>
        <taxon>Sophophora</taxon>
    </lineage>
</organism>
<proteinExistence type="evidence at transcript level"/>
<name>PDE9A_DROME</name>
<dbReference type="EC" id="3.1.4.35" evidence="1"/>
<dbReference type="EMBL" id="AE014298">
    <property type="protein sequence ID" value="AAG22348.2"/>
    <property type="molecule type" value="Genomic_DNA"/>
</dbReference>
<dbReference type="EMBL" id="AE014298">
    <property type="protein sequence ID" value="AGB95337.1"/>
    <property type="molecule type" value="Genomic_DNA"/>
</dbReference>
<dbReference type="EMBL" id="AE014298">
    <property type="protein sequence ID" value="AGB95338.1"/>
    <property type="molecule type" value="Genomic_DNA"/>
</dbReference>
<dbReference type="RefSeq" id="NP_001259495.1">
    <property type="nucleotide sequence ID" value="NM_001272566.1"/>
</dbReference>
<dbReference type="RefSeq" id="NP_001259496.1">
    <property type="nucleotide sequence ID" value="NM_001272567.2"/>
</dbReference>
<dbReference type="RefSeq" id="NP_572834.2">
    <property type="nucleotide sequence ID" value="NM_132606.5"/>
</dbReference>
<dbReference type="SMR" id="Q9I7S6"/>
<dbReference type="FunCoup" id="Q9I7S6">
    <property type="interactions" value="100"/>
</dbReference>
<dbReference type="IntAct" id="Q9I7S6">
    <property type="interactions" value="3"/>
</dbReference>
<dbReference type="STRING" id="7227.FBpp0303421"/>
<dbReference type="GlyGen" id="Q9I7S6">
    <property type="glycosylation" value="1 site"/>
</dbReference>
<dbReference type="PaxDb" id="7227-FBpp0305705"/>
<dbReference type="EnsemblMetazoa" id="FBtr0299635">
    <property type="protein sequence ID" value="FBpp0288910"/>
    <property type="gene ID" value="FBgn0259171"/>
</dbReference>
<dbReference type="EnsemblMetazoa" id="FBtr0333524">
    <property type="protein sequence ID" value="FBpp0305704"/>
    <property type="gene ID" value="FBgn0259171"/>
</dbReference>
<dbReference type="EnsemblMetazoa" id="FBtr0333525">
    <property type="protein sequence ID" value="FBpp0305705"/>
    <property type="gene ID" value="FBgn0259171"/>
</dbReference>
<dbReference type="GeneID" id="32233"/>
<dbReference type="KEGG" id="dme:Dmel_CG42276"/>
<dbReference type="AGR" id="FB:FBgn0259171"/>
<dbReference type="CTD" id="32233"/>
<dbReference type="FlyBase" id="FBgn0259171">
    <property type="gene designation" value="Pde9"/>
</dbReference>
<dbReference type="VEuPathDB" id="VectorBase:FBgn0259171"/>
<dbReference type="eggNOG" id="KOG3689">
    <property type="taxonomic scope" value="Eukaryota"/>
</dbReference>
<dbReference type="GeneTree" id="ENSGT00940000165301"/>
<dbReference type="HOGENOM" id="CLU_246554_0_0_1"/>
<dbReference type="InParanoid" id="Q9I7S6"/>
<dbReference type="OMA" id="WLCLSNR"/>
<dbReference type="OrthoDB" id="546632at2759"/>
<dbReference type="PhylomeDB" id="Q9I7S6"/>
<dbReference type="UniPathway" id="UPA00763">
    <property type="reaction ID" value="UER00748"/>
</dbReference>
<dbReference type="BioGRID-ORCS" id="32233">
    <property type="hits" value="0 hits in 1 CRISPR screen"/>
</dbReference>
<dbReference type="GenomeRNAi" id="32233"/>
<dbReference type="PRO" id="PR:Q9I7S6"/>
<dbReference type="Proteomes" id="UP000000803">
    <property type="component" value="Chromosome X"/>
</dbReference>
<dbReference type="Bgee" id="FBgn0259171">
    <property type="expression patterns" value="Expressed in dorsal appendage forming follicle cell in ovary and 262 other cell types or tissues"/>
</dbReference>
<dbReference type="ExpressionAtlas" id="Q9I7S6">
    <property type="expression patterns" value="baseline and differential"/>
</dbReference>
<dbReference type="GO" id="GO:0004115">
    <property type="term" value="F:3',5'-cyclic-AMP phosphodiesterase activity"/>
    <property type="evidence" value="ECO:0000318"/>
    <property type="project" value="GO_Central"/>
</dbReference>
<dbReference type="GO" id="GO:0047555">
    <property type="term" value="F:3',5'-cyclic-GMP phosphodiesterase activity"/>
    <property type="evidence" value="ECO:0000318"/>
    <property type="project" value="GO_Central"/>
</dbReference>
<dbReference type="GO" id="GO:0004114">
    <property type="term" value="F:3',5'-cyclic-nucleotide phosphodiesterase activity"/>
    <property type="evidence" value="ECO:0000255"/>
    <property type="project" value="FlyBase"/>
</dbReference>
<dbReference type="GO" id="GO:0046872">
    <property type="term" value="F:metal ion binding"/>
    <property type="evidence" value="ECO:0007669"/>
    <property type="project" value="UniProtKB-KW"/>
</dbReference>
<dbReference type="GO" id="GO:0019933">
    <property type="term" value="P:cAMP-mediated signaling"/>
    <property type="evidence" value="ECO:0000318"/>
    <property type="project" value="GO_Central"/>
</dbReference>
<dbReference type="GO" id="GO:0046069">
    <property type="term" value="P:cGMP catabolic process"/>
    <property type="evidence" value="ECO:0000318"/>
    <property type="project" value="GO_Central"/>
</dbReference>
<dbReference type="GO" id="GO:0009187">
    <property type="term" value="P:cyclic nucleotide metabolic process"/>
    <property type="evidence" value="ECO:0000255"/>
    <property type="project" value="FlyBase"/>
</dbReference>
<dbReference type="CDD" id="cd00077">
    <property type="entry name" value="HDc"/>
    <property type="match status" value="1"/>
</dbReference>
<dbReference type="FunFam" id="1.10.1300.10:FF:000006">
    <property type="entry name" value="Phosphodiesterase 9A"/>
    <property type="match status" value="1"/>
</dbReference>
<dbReference type="Gene3D" id="1.10.1300.10">
    <property type="entry name" value="3'5'-cyclic nucleotide phosphodiesterase, catalytic domain"/>
    <property type="match status" value="1"/>
</dbReference>
<dbReference type="InterPro" id="IPR003607">
    <property type="entry name" value="HD/PDEase_dom"/>
</dbReference>
<dbReference type="InterPro" id="IPR023088">
    <property type="entry name" value="PDEase"/>
</dbReference>
<dbReference type="InterPro" id="IPR002073">
    <property type="entry name" value="PDEase_catalytic_dom"/>
</dbReference>
<dbReference type="InterPro" id="IPR036971">
    <property type="entry name" value="PDEase_catalytic_dom_sf"/>
</dbReference>
<dbReference type="InterPro" id="IPR023174">
    <property type="entry name" value="PDEase_CS"/>
</dbReference>
<dbReference type="PANTHER" id="PTHR11347">
    <property type="entry name" value="CYCLIC NUCLEOTIDE PHOSPHODIESTERASE"/>
    <property type="match status" value="1"/>
</dbReference>
<dbReference type="Pfam" id="PF00233">
    <property type="entry name" value="PDEase_I"/>
    <property type="match status" value="1"/>
</dbReference>
<dbReference type="PRINTS" id="PR00387">
    <property type="entry name" value="PDIESTERASE1"/>
</dbReference>
<dbReference type="SMART" id="SM00471">
    <property type="entry name" value="HDc"/>
    <property type="match status" value="1"/>
</dbReference>
<dbReference type="SUPFAM" id="SSF109604">
    <property type="entry name" value="HD-domain/PDEase-like"/>
    <property type="match status" value="1"/>
</dbReference>
<dbReference type="PROSITE" id="PS00126">
    <property type="entry name" value="PDEASE_I_1"/>
    <property type="match status" value="1"/>
</dbReference>
<dbReference type="PROSITE" id="PS51845">
    <property type="entry name" value="PDEASE_I_2"/>
    <property type="match status" value="1"/>
</dbReference>